<reference key="1">
    <citation type="journal article" date="1999" name="Genetics">
        <title>Divergence of the hyperthermophilic archaea Pyrococcus furiosus and P. horikoshii inferred from complete genomic sequences.</title>
        <authorList>
            <person name="Maeder D.L."/>
            <person name="Weiss R.B."/>
            <person name="Dunn D.M."/>
            <person name="Cherry J.L."/>
            <person name="Gonzalez J.M."/>
            <person name="DiRuggiero J."/>
            <person name="Robb F.T."/>
        </authorList>
    </citation>
    <scope>NUCLEOTIDE SEQUENCE [LARGE SCALE GENOMIC DNA]</scope>
    <source>
        <strain>ATCC 43587 / DSM 3638 / JCM 8422 / Vc1</strain>
    </source>
</reference>
<name>PYRI_PYRFU</name>
<gene>
    <name evidence="1" type="primary">pyrI</name>
    <name type="ordered locus">PF0598</name>
</gene>
<proteinExistence type="inferred from homology"/>
<dbReference type="EMBL" id="AE009950">
    <property type="protein sequence ID" value="AAL80722.1"/>
    <property type="molecule type" value="Genomic_DNA"/>
</dbReference>
<dbReference type="RefSeq" id="WP_011011717.1">
    <property type="nucleotide sequence ID" value="NZ_CP023154.1"/>
</dbReference>
<dbReference type="SMR" id="Q8U374"/>
<dbReference type="STRING" id="186497.PF0598"/>
<dbReference type="PaxDb" id="186497-PF0598"/>
<dbReference type="GeneID" id="41712403"/>
<dbReference type="KEGG" id="pfu:PF0598"/>
<dbReference type="PATRIC" id="fig|186497.12.peg.627"/>
<dbReference type="eggNOG" id="arCOG04229">
    <property type="taxonomic scope" value="Archaea"/>
</dbReference>
<dbReference type="HOGENOM" id="CLU_128576_0_0_2"/>
<dbReference type="OrthoDB" id="7000at2157"/>
<dbReference type="PhylomeDB" id="Q8U374"/>
<dbReference type="Proteomes" id="UP000001013">
    <property type="component" value="Chromosome"/>
</dbReference>
<dbReference type="GO" id="GO:0009347">
    <property type="term" value="C:aspartate carbamoyltransferase complex"/>
    <property type="evidence" value="ECO:0007669"/>
    <property type="project" value="InterPro"/>
</dbReference>
<dbReference type="GO" id="GO:0046872">
    <property type="term" value="F:metal ion binding"/>
    <property type="evidence" value="ECO:0007669"/>
    <property type="project" value="UniProtKB-KW"/>
</dbReference>
<dbReference type="GO" id="GO:0006207">
    <property type="term" value="P:'de novo' pyrimidine nucleobase biosynthetic process"/>
    <property type="evidence" value="ECO:0007669"/>
    <property type="project" value="InterPro"/>
</dbReference>
<dbReference type="GO" id="GO:0006221">
    <property type="term" value="P:pyrimidine nucleotide biosynthetic process"/>
    <property type="evidence" value="ECO:0007669"/>
    <property type="project" value="UniProtKB-UniRule"/>
</dbReference>
<dbReference type="Gene3D" id="2.30.30.20">
    <property type="entry name" value="Aspartate carbamoyltransferase regulatory subunit, C-terminal domain"/>
    <property type="match status" value="1"/>
</dbReference>
<dbReference type="Gene3D" id="3.30.70.140">
    <property type="entry name" value="Aspartate carbamoyltransferase regulatory subunit, N-terminal domain"/>
    <property type="match status" value="1"/>
</dbReference>
<dbReference type="HAMAP" id="MF_00002">
    <property type="entry name" value="Asp_carb_tr_reg"/>
    <property type="match status" value="1"/>
</dbReference>
<dbReference type="InterPro" id="IPR020545">
    <property type="entry name" value="Asp_carbamoyltransf_reg_N"/>
</dbReference>
<dbReference type="InterPro" id="IPR002801">
    <property type="entry name" value="Asp_carbamoylTrfase_reg"/>
</dbReference>
<dbReference type="InterPro" id="IPR020542">
    <property type="entry name" value="Asp_carbamoyltrfase_reg_C"/>
</dbReference>
<dbReference type="InterPro" id="IPR036792">
    <property type="entry name" value="Asp_carbatrfase_reg_C_sf"/>
</dbReference>
<dbReference type="InterPro" id="IPR036793">
    <property type="entry name" value="Asp_carbatrfase_reg_N_sf"/>
</dbReference>
<dbReference type="NCBIfam" id="TIGR00240">
    <property type="entry name" value="ATCase_reg"/>
    <property type="match status" value="1"/>
</dbReference>
<dbReference type="PANTHER" id="PTHR35805">
    <property type="entry name" value="ASPARTATE CARBAMOYLTRANSFERASE REGULATORY CHAIN"/>
    <property type="match status" value="1"/>
</dbReference>
<dbReference type="PANTHER" id="PTHR35805:SF1">
    <property type="entry name" value="ASPARTATE CARBAMOYLTRANSFERASE REGULATORY CHAIN"/>
    <property type="match status" value="1"/>
</dbReference>
<dbReference type="Pfam" id="PF01948">
    <property type="entry name" value="PyrI"/>
    <property type="match status" value="1"/>
</dbReference>
<dbReference type="Pfam" id="PF02748">
    <property type="entry name" value="PyrI_C"/>
    <property type="match status" value="1"/>
</dbReference>
<dbReference type="SUPFAM" id="SSF57825">
    <property type="entry name" value="Aspartate carbamoyltransferase, Regulatory-chain, C-terminal domain"/>
    <property type="match status" value="1"/>
</dbReference>
<dbReference type="SUPFAM" id="SSF54893">
    <property type="entry name" value="Aspartate carbamoyltransferase, Regulatory-chain, N-terminal domain"/>
    <property type="match status" value="1"/>
</dbReference>
<sequence length="152" mass="16890">MAELKVSAIKEGTVIDHIPAGKGLKVIQILGLGELKNGGAVLLAMNVPSKKLGRKDIVKVEGKFLSEEEVNKIALVAPTATVNIIREYKVVEKFKVEIPDVIEGILKCGNPNCITHYEYVTPKFYVISKEPLKVRCHYCERTMEEEEILANL</sequence>
<comment type="function">
    <text evidence="1">Involved in allosteric regulation of aspartate carbamoyltransferase.</text>
</comment>
<comment type="cofactor">
    <cofactor evidence="1">
        <name>Zn(2+)</name>
        <dbReference type="ChEBI" id="CHEBI:29105"/>
    </cofactor>
    <text evidence="1">Binds 1 zinc ion per subunit.</text>
</comment>
<comment type="subunit">
    <text evidence="1">Contains catalytic and regulatory chains.</text>
</comment>
<comment type="similarity">
    <text evidence="1">Belongs to the PyrI family.</text>
</comment>
<evidence type="ECO:0000255" key="1">
    <source>
        <dbReference type="HAMAP-Rule" id="MF_00002"/>
    </source>
</evidence>
<protein>
    <recommendedName>
        <fullName evidence="1">Aspartate carbamoyltransferase regulatory chain</fullName>
    </recommendedName>
</protein>
<keyword id="KW-0479">Metal-binding</keyword>
<keyword id="KW-0665">Pyrimidine biosynthesis</keyword>
<keyword id="KW-1185">Reference proteome</keyword>
<keyword id="KW-0862">Zinc</keyword>
<organism>
    <name type="scientific">Pyrococcus furiosus (strain ATCC 43587 / DSM 3638 / JCM 8422 / Vc1)</name>
    <dbReference type="NCBI Taxonomy" id="186497"/>
    <lineage>
        <taxon>Archaea</taxon>
        <taxon>Methanobacteriati</taxon>
        <taxon>Methanobacteriota</taxon>
        <taxon>Thermococci</taxon>
        <taxon>Thermococcales</taxon>
        <taxon>Thermococcaceae</taxon>
        <taxon>Pyrococcus</taxon>
    </lineage>
</organism>
<accession>Q8U374</accession>
<feature type="chain" id="PRO_0000142339" description="Aspartate carbamoyltransferase regulatory chain">
    <location>
        <begin position="1"/>
        <end position="152"/>
    </location>
</feature>
<feature type="binding site" evidence="1">
    <location>
        <position position="108"/>
    </location>
    <ligand>
        <name>Zn(2+)</name>
        <dbReference type="ChEBI" id="CHEBI:29105"/>
    </ligand>
</feature>
<feature type="binding site" evidence="1">
    <location>
        <position position="113"/>
    </location>
    <ligand>
        <name>Zn(2+)</name>
        <dbReference type="ChEBI" id="CHEBI:29105"/>
    </ligand>
</feature>
<feature type="binding site" evidence="1">
    <location>
        <position position="136"/>
    </location>
    <ligand>
        <name>Zn(2+)</name>
        <dbReference type="ChEBI" id="CHEBI:29105"/>
    </ligand>
</feature>
<feature type="binding site" evidence="1">
    <location>
        <position position="139"/>
    </location>
    <ligand>
        <name>Zn(2+)</name>
        <dbReference type="ChEBI" id="CHEBI:29105"/>
    </ligand>
</feature>